<reference key="1">
    <citation type="submission" date="2006-08" db="EMBL/GenBank/DDBJ databases">
        <title>Complete sequence of chromosome 1 of Shewanella sp. MR-7.</title>
        <authorList>
            <person name="Copeland A."/>
            <person name="Lucas S."/>
            <person name="Lapidus A."/>
            <person name="Barry K."/>
            <person name="Detter J.C."/>
            <person name="Glavina del Rio T."/>
            <person name="Hammon N."/>
            <person name="Israni S."/>
            <person name="Dalin E."/>
            <person name="Tice H."/>
            <person name="Pitluck S."/>
            <person name="Kiss H."/>
            <person name="Brettin T."/>
            <person name="Bruce D."/>
            <person name="Han C."/>
            <person name="Tapia R."/>
            <person name="Gilna P."/>
            <person name="Schmutz J."/>
            <person name="Larimer F."/>
            <person name="Land M."/>
            <person name="Hauser L."/>
            <person name="Kyrpides N."/>
            <person name="Mikhailova N."/>
            <person name="Nealson K."/>
            <person name="Konstantinidis K."/>
            <person name="Klappenbach J."/>
            <person name="Tiedje J."/>
            <person name="Richardson P."/>
        </authorList>
    </citation>
    <scope>NUCLEOTIDE SEQUENCE [LARGE SCALE GENOMIC DNA]</scope>
    <source>
        <strain>MR-7</strain>
    </source>
</reference>
<comment type="function">
    <text evidence="1">Part of a membrane-bound complex that couples electron transfer with translocation of ions across the membrane.</text>
</comment>
<comment type="subunit">
    <text evidence="1">The complex is composed of six subunits: RnfA, RnfB, RnfC, RnfD, RnfE and RnfG.</text>
</comment>
<comment type="subcellular location">
    <subcellularLocation>
        <location evidence="1">Cell inner membrane</location>
        <topology evidence="1">Multi-pass membrane protein</topology>
    </subcellularLocation>
</comment>
<comment type="similarity">
    <text evidence="1">Belongs to the NqrDE/RnfAE family.</text>
</comment>
<evidence type="ECO:0000255" key="1">
    <source>
        <dbReference type="HAMAP-Rule" id="MF_00478"/>
    </source>
</evidence>
<dbReference type="EC" id="7.-.-.-" evidence="1"/>
<dbReference type="EMBL" id="CP000444">
    <property type="protein sequence ID" value="ABI42895.1"/>
    <property type="molecule type" value="Genomic_DNA"/>
</dbReference>
<dbReference type="SMR" id="Q0HVG0"/>
<dbReference type="KEGG" id="shm:Shewmr7_1906"/>
<dbReference type="HOGENOM" id="CLU_046659_1_0_6"/>
<dbReference type="GO" id="GO:0005886">
    <property type="term" value="C:plasma membrane"/>
    <property type="evidence" value="ECO:0007669"/>
    <property type="project" value="UniProtKB-SubCell"/>
</dbReference>
<dbReference type="GO" id="GO:0022900">
    <property type="term" value="P:electron transport chain"/>
    <property type="evidence" value="ECO:0007669"/>
    <property type="project" value="UniProtKB-UniRule"/>
</dbReference>
<dbReference type="HAMAP" id="MF_00478">
    <property type="entry name" value="RsxE_RnfE"/>
    <property type="match status" value="1"/>
</dbReference>
<dbReference type="InterPro" id="IPR003667">
    <property type="entry name" value="NqrDE/RnfAE"/>
</dbReference>
<dbReference type="InterPro" id="IPR010968">
    <property type="entry name" value="RnfE"/>
</dbReference>
<dbReference type="NCBIfam" id="NF009070">
    <property type="entry name" value="PRK12405.1"/>
    <property type="match status" value="1"/>
</dbReference>
<dbReference type="NCBIfam" id="TIGR01948">
    <property type="entry name" value="rnfE"/>
    <property type="match status" value="1"/>
</dbReference>
<dbReference type="PANTHER" id="PTHR30586">
    <property type="entry name" value="ELECTRON TRANSPORT COMPLEX PROTEIN RNFE"/>
    <property type="match status" value="1"/>
</dbReference>
<dbReference type="PANTHER" id="PTHR30586:SF0">
    <property type="entry name" value="ION-TRANSLOCATING OXIDOREDUCTASE COMPLEX SUBUNIT E"/>
    <property type="match status" value="1"/>
</dbReference>
<dbReference type="Pfam" id="PF02508">
    <property type="entry name" value="Rnf-Nqr"/>
    <property type="match status" value="1"/>
</dbReference>
<dbReference type="PIRSF" id="PIRSF006102">
    <property type="entry name" value="NQR_DE"/>
    <property type="match status" value="1"/>
</dbReference>
<keyword id="KW-0997">Cell inner membrane</keyword>
<keyword id="KW-1003">Cell membrane</keyword>
<keyword id="KW-0249">Electron transport</keyword>
<keyword id="KW-0472">Membrane</keyword>
<keyword id="KW-1278">Translocase</keyword>
<keyword id="KW-0812">Transmembrane</keyword>
<keyword id="KW-1133">Transmembrane helix</keyword>
<keyword id="KW-0813">Transport</keyword>
<protein>
    <recommendedName>
        <fullName evidence="1">Ion-translocating oxidoreductase complex subunit E</fullName>
        <ecNumber evidence="1">7.-.-.-</ecNumber>
    </recommendedName>
    <alternativeName>
        <fullName evidence="1">Rnf electron transport complex subunit E</fullName>
    </alternativeName>
</protein>
<organism>
    <name type="scientific">Shewanella sp. (strain MR-7)</name>
    <dbReference type="NCBI Taxonomy" id="60481"/>
    <lineage>
        <taxon>Bacteria</taxon>
        <taxon>Pseudomonadati</taxon>
        <taxon>Pseudomonadota</taxon>
        <taxon>Gammaproteobacteria</taxon>
        <taxon>Alteromonadales</taxon>
        <taxon>Shewanellaceae</taxon>
        <taxon>Shewanella</taxon>
    </lineage>
</organism>
<sequence length="232" mass="24960">MTNYREIAWQGLWKNNPGLVQLLGLCPLLAVTATLTNALGLGVATMLVLIGSNILVSLVRDYVPKEIRIPVFVMIIAALVTAVQLLINAYAYGLYLSLGIFLPLIVTNCIIIGRAEAFASRNNAFSAAFDGLMMGLGFTLVLAVLGATREILGQGTLFDGADQLLGPWAKALTIQVWQVDTPFLLAMLPPGAFIVMGLLIALKNVIDKKLKERQPEAAVQPSVTRARITKVS</sequence>
<proteinExistence type="inferred from homology"/>
<name>RNFE_SHESR</name>
<feature type="chain" id="PRO_1000014107" description="Ion-translocating oxidoreductase complex subunit E">
    <location>
        <begin position="1"/>
        <end position="232"/>
    </location>
</feature>
<feature type="transmembrane region" description="Helical" evidence="1">
    <location>
        <begin position="18"/>
        <end position="38"/>
    </location>
</feature>
<feature type="transmembrane region" description="Helical" evidence="1">
    <location>
        <begin position="39"/>
        <end position="59"/>
    </location>
</feature>
<feature type="transmembrane region" description="Helical" evidence="1">
    <location>
        <begin position="69"/>
        <end position="89"/>
    </location>
</feature>
<feature type="transmembrane region" description="Helical" evidence="1">
    <location>
        <begin position="93"/>
        <end position="113"/>
    </location>
</feature>
<feature type="transmembrane region" description="Helical" evidence="1">
    <location>
        <begin position="127"/>
        <end position="147"/>
    </location>
</feature>
<feature type="transmembrane region" description="Helical" evidence="1">
    <location>
        <begin position="182"/>
        <end position="202"/>
    </location>
</feature>
<accession>Q0HVG0</accession>
<gene>
    <name evidence="1" type="primary">rnfE</name>
    <name type="ordered locus">Shewmr7_1906</name>
</gene>